<sequence>MFRRLLIATVVGILAAFAVAGFRHAMLLLEWLFLNNDSGSLVNAATNLSPWRRLLTPALGGLAAGLLLMGWQKFTQQRPHAPTDYMEALQTDGQFDYAASLVKSLASLLVVTSGSAIGREGAMILLAALAASCFAQRFTPRQEWKLWIACGAAAGMAAAYRAPLAGSLFIAEVLFGTMMLASLGPVIISAVVALLVSNLINHSDALLYSVQLSVTVQARDYALIISTGVLAGLCGPLLLTLMNACHRGFVSLKLAPPWQLALGGLIVGLLSLFTPAVWGNGYSTVQSFLTAPPLLMIIAGIFLCKLFAVLASSGSGAPGGVFTPTLFIGLAIGMLYGRSLGLWFPDGEEITLLLGLTGMATLLAATTHAPIMSTLMICEMTGEYQLLPGLLIACVIASVISRTLHRDSIYRQHTAKHS</sequence>
<dbReference type="EMBL" id="CP000970">
    <property type="protein sequence ID" value="ACB18654.1"/>
    <property type="molecule type" value="Genomic_DNA"/>
</dbReference>
<dbReference type="SMR" id="B1LEU5"/>
<dbReference type="KEGG" id="ecm:EcSMS35_1607"/>
<dbReference type="HOGENOM" id="CLU_015263_5_2_6"/>
<dbReference type="Proteomes" id="UP000007011">
    <property type="component" value="Chromosome"/>
</dbReference>
<dbReference type="GO" id="GO:0034707">
    <property type="term" value="C:chloride channel complex"/>
    <property type="evidence" value="ECO:0007669"/>
    <property type="project" value="UniProtKB-KW"/>
</dbReference>
<dbReference type="GO" id="GO:0005886">
    <property type="term" value="C:plasma membrane"/>
    <property type="evidence" value="ECO:0007669"/>
    <property type="project" value="UniProtKB-SubCell"/>
</dbReference>
<dbReference type="GO" id="GO:0005247">
    <property type="term" value="F:voltage-gated chloride channel activity"/>
    <property type="evidence" value="ECO:0007669"/>
    <property type="project" value="UniProtKB-UniRule"/>
</dbReference>
<dbReference type="GO" id="GO:0010447">
    <property type="term" value="P:response to acidic pH"/>
    <property type="evidence" value="ECO:0007669"/>
    <property type="project" value="InterPro"/>
</dbReference>
<dbReference type="CDD" id="cd00400">
    <property type="entry name" value="Voltage_gated_ClC"/>
    <property type="match status" value="1"/>
</dbReference>
<dbReference type="FunFam" id="1.10.3080.10:FF:000010">
    <property type="entry name" value="Voltage-gated ClC-type chloride channel ClcB"/>
    <property type="match status" value="1"/>
</dbReference>
<dbReference type="Gene3D" id="1.10.3080.10">
    <property type="entry name" value="Clc chloride channel"/>
    <property type="match status" value="1"/>
</dbReference>
<dbReference type="HAMAP" id="MF_01203">
    <property type="entry name" value="CLC_ClcB"/>
    <property type="match status" value="1"/>
</dbReference>
<dbReference type="InterPro" id="IPR014743">
    <property type="entry name" value="Cl-channel_core"/>
</dbReference>
<dbReference type="InterPro" id="IPR023790">
    <property type="entry name" value="Cl-channel_volt-gated_ClcB"/>
</dbReference>
<dbReference type="InterPro" id="IPR001807">
    <property type="entry name" value="ClC"/>
</dbReference>
<dbReference type="InterPro" id="IPR050368">
    <property type="entry name" value="ClC-type_chloride_channel"/>
</dbReference>
<dbReference type="NCBIfam" id="NF002437">
    <property type="entry name" value="PRK01610.1"/>
    <property type="match status" value="1"/>
</dbReference>
<dbReference type="PANTHER" id="PTHR43427">
    <property type="entry name" value="CHLORIDE CHANNEL PROTEIN CLC-E"/>
    <property type="match status" value="1"/>
</dbReference>
<dbReference type="PANTHER" id="PTHR43427:SF6">
    <property type="entry name" value="CHLORIDE CHANNEL PROTEIN CLC-E"/>
    <property type="match status" value="1"/>
</dbReference>
<dbReference type="Pfam" id="PF00654">
    <property type="entry name" value="Voltage_CLC"/>
    <property type="match status" value="1"/>
</dbReference>
<dbReference type="PRINTS" id="PR00762">
    <property type="entry name" value="CLCHANNEL"/>
</dbReference>
<dbReference type="SUPFAM" id="SSF81340">
    <property type="entry name" value="Clc chloride channel"/>
    <property type="match status" value="1"/>
</dbReference>
<organism>
    <name type="scientific">Escherichia coli (strain SMS-3-5 / SECEC)</name>
    <dbReference type="NCBI Taxonomy" id="439855"/>
    <lineage>
        <taxon>Bacteria</taxon>
        <taxon>Pseudomonadati</taxon>
        <taxon>Pseudomonadota</taxon>
        <taxon>Gammaproteobacteria</taxon>
        <taxon>Enterobacterales</taxon>
        <taxon>Enterobacteriaceae</taxon>
        <taxon>Escherichia</taxon>
    </lineage>
</organism>
<feature type="chain" id="PRO_1000138685" description="Voltage-gated ClC-type chloride channel ClcB">
    <location>
        <begin position="1"/>
        <end position="418"/>
    </location>
</feature>
<feature type="transmembrane region" description="Helical" evidence="1">
    <location>
        <begin position="5"/>
        <end position="25"/>
    </location>
</feature>
<feature type="transmembrane region" description="Helical" evidence="1">
    <location>
        <begin position="54"/>
        <end position="74"/>
    </location>
</feature>
<feature type="transmembrane region" description="Helical" evidence="1">
    <location>
        <begin position="146"/>
        <end position="166"/>
    </location>
</feature>
<feature type="transmembrane region" description="Helical" evidence="1">
    <location>
        <begin position="168"/>
        <end position="188"/>
    </location>
</feature>
<feature type="transmembrane region" description="Helical" evidence="1">
    <location>
        <begin position="222"/>
        <end position="242"/>
    </location>
</feature>
<feature type="transmembrane region" description="Helical" evidence="1">
    <location>
        <begin position="258"/>
        <end position="278"/>
    </location>
</feature>
<feature type="transmembrane region" description="Helical" evidence="1">
    <location>
        <begin position="291"/>
        <end position="311"/>
    </location>
</feature>
<feature type="transmembrane region" description="Helical" evidence="1">
    <location>
        <begin position="316"/>
        <end position="336"/>
    </location>
</feature>
<feature type="transmembrane region" description="Helical" evidence="1">
    <location>
        <begin position="352"/>
        <end position="372"/>
    </location>
</feature>
<feature type="transmembrane region" description="Helical" evidence="1">
    <location>
        <begin position="380"/>
        <end position="400"/>
    </location>
</feature>
<evidence type="ECO:0000255" key="1">
    <source>
        <dbReference type="HAMAP-Rule" id="MF_01203"/>
    </source>
</evidence>
<name>CLCB_ECOSM</name>
<proteinExistence type="inferred from homology"/>
<keyword id="KW-0997">Cell inner membrane</keyword>
<keyword id="KW-1003">Cell membrane</keyword>
<keyword id="KW-0868">Chloride</keyword>
<keyword id="KW-0869">Chloride channel</keyword>
<keyword id="KW-0407">Ion channel</keyword>
<keyword id="KW-0406">Ion transport</keyword>
<keyword id="KW-0472">Membrane</keyword>
<keyword id="KW-0812">Transmembrane</keyword>
<keyword id="KW-1133">Transmembrane helix</keyword>
<keyword id="KW-0813">Transport</keyword>
<keyword id="KW-0851">Voltage-gated channel</keyword>
<comment type="function">
    <text evidence="1">Probably acts as an electrical shunt for an outwardly-directed proton pump that is linked to amino acid decarboxylation, as part of the extreme acid resistance (XAR) response.</text>
</comment>
<comment type="subcellular location">
    <subcellularLocation>
        <location evidence="1">Cell inner membrane</location>
        <topology evidence="1">Multi-pass membrane protein</topology>
    </subcellularLocation>
</comment>
<comment type="similarity">
    <text evidence="1">Belongs to the chloride channel (TC 2.A.49) family. ClcB subfamily.</text>
</comment>
<gene>
    <name evidence="1" type="primary">clcB</name>
    <name type="ordered locus">EcSMS35_1607</name>
</gene>
<reference key="1">
    <citation type="journal article" date="2008" name="J. Bacteriol.">
        <title>Insights into the environmental resistance gene pool from the genome sequence of the multidrug-resistant environmental isolate Escherichia coli SMS-3-5.</title>
        <authorList>
            <person name="Fricke W.F."/>
            <person name="Wright M.S."/>
            <person name="Lindell A.H."/>
            <person name="Harkins D.M."/>
            <person name="Baker-Austin C."/>
            <person name="Ravel J."/>
            <person name="Stepanauskas R."/>
        </authorList>
    </citation>
    <scope>NUCLEOTIDE SEQUENCE [LARGE SCALE GENOMIC DNA]</scope>
    <source>
        <strain>SMS-3-5 / SECEC</strain>
    </source>
</reference>
<protein>
    <recommendedName>
        <fullName evidence="1">Voltage-gated ClC-type chloride channel ClcB</fullName>
    </recommendedName>
</protein>
<accession>B1LEU5</accession>